<organism>
    <name type="scientific">Streptococcus suis (strain 98HAH33)</name>
    <dbReference type="NCBI Taxonomy" id="391296"/>
    <lineage>
        <taxon>Bacteria</taxon>
        <taxon>Bacillati</taxon>
        <taxon>Bacillota</taxon>
        <taxon>Bacilli</taxon>
        <taxon>Lactobacillales</taxon>
        <taxon>Streptococcaceae</taxon>
        <taxon>Streptococcus</taxon>
    </lineage>
</organism>
<evidence type="ECO:0000255" key="1">
    <source>
        <dbReference type="HAMAP-Rule" id="MF_00418"/>
    </source>
</evidence>
<evidence type="ECO:0000305" key="2"/>
<sequence>MSIQDLRDVKIITAMITPFKEDGSINFEVLPELIEHLLSHHTEGILLAGTTAESPTLTHEEELELFGAVQKIVNGRVPLIAGIGTNDTRDSIEFAKEVAAFGGFAAGLAIVPYYNKPSQEGMYQHFKAIADASDLPIIIYNIPGRVVVEMTPETMLRLAEHPNIIGVKECTSLANMAYLIEHKPEDFLIYTGEDGDAFHAMNLGADGVISVASHTNGDEMYEMFTAIEQQDIRTAAAIQRKFIPKVNALFSYPSPAPVKAVLNYLGFEVGPLRLPLVPCPEEDAKRIIKVVVDGDYEATKATVTGVVRPDY</sequence>
<proteinExistence type="inferred from homology"/>
<reference key="1">
    <citation type="journal article" date="2007" name="PLoS ONE">
        <title>A glimpse of streptococcal toxic shock syndrome from comparative genomics of S. suis 2 Chinese isolates.</title>
        <authorList>
            <person name="Chen C."/>
            <person name="Tang J."/>
            <person name="Dong W."/>
            <person name="Wang C."/>
            <person name="Feng Y."/>
            <person name="Wang J."/>
            <person name="Zheng F."/>
            <person name="Pan X."/>
            <person name="Liu D."/>
            <person name="Li M."/>
            <person name="Song Y."/>
            <person name="Zhu X."/>
            <person name="Sun H."/>
            <person name="Feng T."/>
            <person name="Guo Z."/>
            <person name="Ju A."/>
            <person name="Ge J."/>
            <person name="Dong Y."/>
            <person name="Sun W."/>
            <person name="Jiang Y."/>
            <person name="Wang J."/>
            <person name="Yan J."/>
            <person name="Yang H."/>
            <person name="Wang X."/>
            <person name="Gao G.F."/>
            <person name="Yang R."/>
            <person name="Wang J."/>
            <person name="Yu J."/>
        </authorList>
    </citation>
    <scope>NUCLEOTIDE SEQUENCE [LARGE SCALE GENOMIC DNA]</scope>
    <source>
        <strain>98HAH33</strain>
    </source>
</reference>
<gene>
    <name evidence="1" type="primary">dapA</name>
    <name type="ordered locus">SSU98_0718</name>
</gene>
<protein>
    <recommendedName>
        <fullName evidence="1">4-hydroxy-tetrahydrodipicolinate synthase</fullName>
        <shortName evidence="1">HTPA synthase</shortName>
        <ecNumber evidence="1">4.3.3.7</ecNumber>
    </recommendedName>
</protein>
<dbReference type="EC" id="4.3.3.7" evidence="1"/>
<dbReference type="EMBL" id="CP000408">
    <property type="protein sequence ID" value="ABP91876.1"/>
    <property type="molecule type" value="Genomic_DNA"/>
</dbReference>
<dbReference type="SMR" id="A4W0I7"/>
<dbReference type="KEGG" id="ssv:SSU98_0718"/>
<dbReference type="HOGENOM" id="CLU_049343_7_1_9"/>
<dbReference type="UniPathway" id="UPA00034">
    <property type="reaction ID" value="UER00017"/>
</dbReference>
<dbReference type="GO" id="GO:0005829">
    <property type="term" value="C:cytosol"/>
    <property type="evidence" value="ECO:0007669"/>
    <property type="project" value="TreeGrafter"/>
</dbReference>
<dbReference type="GO" id="GO:0008840">
    <property type="term" value="F:4-hydroxy-tetrahydrodipicolinate synthase activity"/>
    <property type="evidence" value="ECO:0007669"/>
    <property type="project" value="UniProtKB-UniRule"/>
</dbReference>
<dbReference type="GO" id="GO:0019877">
    <property type="term" value="P:diaminopimelate biosynthetic process"/>
    <property type="evidence" value="ECO:0007669"/>
    <property type="project" value="UniProtKB-UniRule"/>
</dbReference>
<dbReference type="GO" id="GO:0009089">
    <property type="term" value="P:lysine biosynthetic process via diaminopimelate"/>
    <property type="evidence" value="ECO:0007669"/>
    <property type="project" value="UniProtKB-UniRule"/>
</dbReference>
<dbReference type="CDD" id="cd00950">
    <property type="entry name" value="DHDPS"/>
    <property type="match status" value="1"/>
</dbReference>
<dbReference type="Gene3D" id="3.20.20.70">
    <property type="entry name" value="Aldolase class I"/>
    <property type="match status" value="1"/>
</dbReference>
<dbReference type="HAMAP" id="MF_00418">
    <property type="entry name" value="DapA"/>
    <property type="match status" value="1"/>
</dbReference>
<dbReference type="InterPro" id="IPR013785">
    <property type="entry name" value="Aldolase_TIM"/>
</dbReference>
<dbReference type="InterPro" id="IPR005263">
    <property type="entry name" value="DapA"/>
</dbReference>
<dbReference type="InterPro" id="IPR002220">
    <property type="entry name" value="DapA-like"/>
</dbReference>
<dbReference type="InterPro" id="IPR020625">
    <property type="entry name" value="Schiff_base-form_aldolases_AS"/>
</dbReference>
<dbReference type="NCBIfam" id="TIGR00674">
    <property type="entry name" value="dapA"/>
    <property type="match status" value="1"/>
</dbReference>
<dbReference type="PANTHER" id="PTHR12128:SF66">
    <property type="entry name" value="4-HYDROXY-2-OXOGLUTARATE ALDOLASE, MITOCHONDRIAL"/>
    <property type="match status" value="1"/>
</dbReference>
<dbReference type="PANTHER" id="PTHR12128">
    <property type="entry name" value="DIHYDRODIPICOLINATE SYNTHASE"/>
    <property type="match status" value="1"/>
</dbReference>
<dbReference type="Pfam" id="PF00701">
    <property type="entry name" value="DHDPS"/>
    <property type="match status" value="1"/>
</dbReference>
<dbReference type="PIRSF" id="PIRSF001365">
    <property type="entry name" value="DHDPS"/>
    <property type="match status" value="1"/>
</dbReference>
<dbReference type="PRINTS" id="PR00146">
    <property type="entry name" value="DHPICSNTHASE"/>
</dbReference>
<dbReference type="SMART" id="SM01130">
    <property type="entry name" value="DHDPS"/>
    <property type="match status" value="1"/>
</dbReference>
<dbReference type="SUPFAM" id="SSF51569">
    <property type="entry name" value="Aldolase"/>
    <property type="match status" value="1"/>
</dbReference>
<dbReference type="PROSITE" id="PS00666">
    <property type="entry name" value="DHDPS_2"/>
    <property type="match status" value="1"/>
</dbReference>
<name>DAPA_STRS2</name>
<feature type="chain" id="PRO_1000050281" description="4-hydroxy-tetrahydrodipicolinate synthase">
    <location>
        <begin position="1"/>
        <end position="311"/>
    </location>
</feature>
<feature type="active site" description="Proton donor/acceptor" evidence="1">
    <location>
        <position position="140"/>
    </location>
</feature>
<feature type="active site" description="Schiff-base intermediate with substrate" evidence="1">
    <location>
        <position position="168"/>
    </location>
</feature>
<feature type="binding site" evidence="1">
    <location>
        <position position="51"/>
    </location>
    <ligand>
        <name>pyruvate</name>
        <dbReference type="ChEBI" id="CHEBI:15361"/>
    </ligand>
</feature>
<feature type="binding site" evidence="1">
    <location>
        <position position="209"/>
    </location>
    <ligand>
        <name>pyruvate</name>
        <dbReference type="ChEBI" id="CHEBI:15361"/>
    </ligand>
</feature>
<feature type="site" description="Part of a proton relay during catalysis" evidence="1">
    <location>
        <position position="50"/>
    </location>
</feature>
<feature type="site" description="Part of a proton relay during catalysis" evidence="1">
    <location>
        <position position="114"/>
    </location>
</feature>
<comment type="function">
    <text evidence="1">Catalyzes the condensation of (S)-aspartate-beta-semialdehyde [(S)-ASA] and pyruvate to 4-hydroxy-tetrahydrodipicolinate (HTPA).</text>
</comment>
<comment type="catalytic activity">
    <reaction evidence="1">
        <text>L-aspartate 4-semialdehyde + pyruvate = (2S,4S)-4-hydroxy-2,3,4,5-tetrahydrodipicolinate + H2O + H(+)</text>
        <dbReference type="Rhea" id="RHEA:34171"/>
        <dbReference type="ChEBI" id="CHEBI:15361"/>
        <dbReference type="ChEBI" id="CHEBI:15377"/>
        <dbReference type="ChEBI" id="CHEBI:15378"/>
        <dbReference type="ChEBI" id="CHEBI:67139"/>
        <dbReference type="ChEBI" id="CHEBI:537519"/>
        <dbReference type="EC" id="4.3.3.7"/>
    </reaction>
</comment>
<comment type="pathway">
    <text evidence="1">Amino-acid biosynthesis; L-lysine biosynthesis via DAP pathway; (S)-tetrahydrodipicolinate from L-aspartate: step 3/4.</text>
</comment>
<comment type="subunit">
    <text evidence="1">Homotetramer; dimer of dimers.</text>
</comment>
<comment type="subcellular location">
    <subcellularLocation>
        <location evidence="1">Cytoplasm</location>
    </subcellularLocation>
</comment>
<comment type="similarity">
    <text evidence="1">Belongs to the DapA family.</text>
</comment>
<comment type="caution">
    <text evidence="2">Was originally thought to be a dihydrodipicolinate synthase (DHDPS), catalyzing the condensation of (S)-aspartate-beta-semialdehyde [(S)-ASA] and pyruvate to dihydrodipicolinate (DHDP). However, it was shown in E.coli that the product of the enzymatic reaction is not dihydrodipicolinate but in fact (4S)-4-hydroxy-2,3,4,5-tetrahydro-(2S)-dipicolinic acid (HTPA), and that the consecutive dehydration reaction leading to DHDP is not spontaneous but catalyzed by DapB.</text>
</comment>
<keyword id="KW-0028">Amino-acid biosynthesis</keyword>
<keyword id="KW-0963">Cytoplasm</keyword>
<keyword id="KW-0220">Diaminopimelate biosynthesis</keyword>
<keyword id="KW-0456">Lyase</keyword>
<keyword id="KW-0457">Lysine biosynthesis</keyword>
<keyword id="KW-0704">Schiff base</keyword>
<accession>A4W0I7</accession>